<sequence length="504" mass="56487">MGPGSQQKSEKLRSKSPLADMDGLHAQYVMLETIGHGGCATVKLAQHRLTGTHVAVKTIRKREYWCNRVISEVELLMMADHPNIISLLQVIETKKKVYLIMELCKGKSLYQHIRKAGYLQEHEARALFKQLLSAMNYCHNQGIVHRDLKPDNIMVEKDGKVKIIDFGLGTKVKPGQKLNLFCGTYPFSAPEVLLSTPYDGPKIDVWTLGVVLYFMVTGKIPFDACSIKKLVKRILAGKYSIPSRLSAELQDLLSLLMTANPKLRPTVAEVMVHPWVTEGSGVFPDPCEEQTPLKPDPAIVKAMGHIGFQAQDIEDSLRQRKFNQTMASYCLLKKQILKECDRPTRARPVNPSVTPFPSLVDTATTRLGLRRRENEPTCPWSSANRQVSVCGKSTSKKRDRRVSWPSVLGRPRHTAPTMDHTRTRTRSVPCICSMFCTVQPNSSEESTQGHTRASAADKPVHSRGWPRGIKGWTRMIGNAMRKLCCCIPSKETSHLGQNRVSPKK</sequence>
<keyword id="KW-0067">ATP-binding</keyword>
<keyword id="KW-0418">Kinase</keyword>
<keyword id="KW-0547">Nucleotide-binding</keyword>
<keyword id="KW-1185">Reference proteome</keyword>
<keyword id="KW-0723">Serine/threonine-protein kinase</keyword>
<keyword id="KW-0808">Transferase</keyword>
<comment type="function">
    <text evidence="6">May play a role in sperm motility, especially in the regulation of flagellar function.</text>
</comment>
<comment type="catalytic activity">
    <reaction evidence="1">
        <text>L-seryl-[protein] + ATP = O-phospho-L-seryl-[protein] + ADP + H(+)</text>
        <dbReference type="Rhea" id="RHEA:17989"/>
        <dbReference type="Rhea" id="RHEA-COMP:9863"/>
        <dbReference type="Rhea" id="RHEA-COMP:11604"/>
        <dbReference type="ChEBI" id="CHEBI:15378"/>
        <dbReference type="ChEBI" id="CHEBI:29999"/>
        <dbReference type="ChEBI" id="CHEBI:30616"/>
        <dbReference type="ChEBI" id="CHEBI:83421"/>
        <dbReference type="ChEBI" id="CHEBI:456216"/>
        <dbReference type="EC" id="2.7.11.1"/>
    </reaction>
</comment>
<comment type="catalytic activity">
    <reaction evidence="1">
        <text>L-threonyl-[protein] + ATP = O-phospho-L-threonyl-[protein] + ADP + H(+)</text>
        <dbReference type="Rhea" id="RHEA:46608"/>
        <dbReference type="Rhea" id="RHEA-COMP:11060"/>
        <dbReference type="Rhea" id="RHEA-COMP:11605"/>
        <dbReference type="ChEBI" id="CHEBI:15378"/>
        <dbReference type="ChEBI" id="CHEBI:30013"/>
        <dbReference type="ChEBI" id="CHEBI:30616"/>
        <dbReference type="ChEBI" id="CHEBI:61977"/>
        <dbReference type="ChEBI" id="CHEBI:456216"/>
        <dbReference type="EC" id="2.7.11.1"/>
    </reaction>
</comment>
<comment type="tissue specificity">
    <text evidence="6">Testis-specific. Expressed in the testis from 22 days postpartum (22 dpp).</text>
</comment>
<comment type="similarity">
    <text evidence="7">Belongs to the protein kinase superfamily. CAMK Ser/Thr protein kinase family. Smok subfamily.</text>
</comment>
<protein>
    <recommendedName>
        <fullName evidence="9">Sperm motility kinase 3A</fullName>
        <ecNumber evidence="1">2.7.11.1</ecNumber>
    </recommendedName>
</protein>
<gene>
    <name evidence="9" type="primary">Smok3a</name>
</gene>
<dbReference type="EC" id="2.7.11.1" evidence="1"/>
<dbReference type="EMBL" id="AJ245454">
    <property type="protein sequence ID" value="CAB61342.1"/>
    <property type="molecule type" value="mRNA"/>
</dbReference>
<dbReference type="CCDS" id="CCDS51678.1"/>
<dbReference type="RefSeq" id="NP_001119517.1">
    <property type="nucleotide sequence ID" value="NM_001126045.1"/>
</dbReference>
<dbReference type="RefSeq" id="NP_001162073.1">
    <property type="nucleotide sequence ID" value="NM_001168602.1"/>
</dbReference>
<dbReference type="SMR" id="C0HKC8"/>
<dbReference type="FunCoup" id="C0HKC8">
    <property type="interactions" value="142"/>
</dbReference>
<dbReference type="STRING" id="10090.ENSMUSP00000083049"/>
<dbReference type="iPTMnet" id="C0HKC8"/>
<dbReference type="PhosphoSitePlus" id="C0HKC8"/>
<dbReference type="PaxDb" id="10090-ENSMUSP00000083049"/>
<dbReference type="DNASU" id="545814"/>
<dbReference type="Ensembl" id="ENSMUST00000085886.3">
    <property type="protein sequence ID" value="ENSMUSP00000083049.3"/>
    <property type="gene ID" value="ENSMUSG00000075599.5"/>
</dbReference>
<dbReference type="Ensembl" id="ENSMUST00000100537.3">
    <property type="protein sequence ID" value="ENSMUSP00000098105.3"/>
    <property type="gene ID" value="ENSMUSG00000079156.12"/>
</dbReference>
<dbReference type="Ensembl" id="ENSMUST00000166206.9">
    <property type="protein sequence ID" value="ENSMUSP00000129450.3"/>
    <property type="gene ID" value="ENSMUSG00000079156.12"/>
</dbReference>
<dbReference type="Ensembl" id="ENSMUST00000171498.3">
    <property type="protein sequence ID" value="ENSMUSP00000125938.2"/>
    <property type="gene ID" value="ENSMUSG00000075599.5"/>
</dbReference>
<dbReference type="GeneID" id="545814"/>
<dbReference type="KEGG" id="mmu:545814"/>
<dbReference type="KEGG" id="mmu:622474"/>
<dbReference type="AGR" id="MGI:3693943"/>
<dbReference type="CTD" id="545814"/>
<dbReference type="CTD" id="622474"/>
<dbReference type="MGI" id="MGI:3693943">
    <property type="gene designation" value="Smok3a"/>
</dbReference>
<dbReference type="VEuPathDB" id="HostDB:ENSMUSG00000075599"/>
<dbReference type="VEuPathDB" id="HostDB:ENSMUSG00000079156"/>
<dbReference type="eggNOG" id="KOG0586">
    <property type="taxonomic scope" value="Eukaryota"/>
</dbReference>
<dbReference type="InParanoid" id="C0HKC8"/>
<dbReference type="OMA" id="CAISAPC"/>
<dbReference type="OrthoDB" id="9633915at2759"/>
<dbReference type="BioGRID-ORCS" id="545814">
    <property type="hits" value="1 hit in 38 CRISPR screens"/>
</dbReference>
<dbReference type="BioGRID-ORCS" id="622474">
    <property type="hits" value="2 hits in 37 CRISPR screens"/>
</dbReference>
<dbReference type="PRO" id="PR:C0HKC8"/>
<dbReference type="Proteomes" id="UP000000589">
    <property type="component" value="Chromosome 5"/>
</dbReference>
<dbReference type="RNAct" id="C0HKC8">
    <property type="molecule type" value="protein"/>
</dbReference>
<dbReference type="Bgee" id="ENSMUSG00000075599">
    <property type="expression patterns" value="Expressed in testis and 2 other cell types or tissues"/>
</dbReference>
<dbReference type="ExpressionAtlas" id="C0HKC8">
    <property type="expression patterns" value="baseline"/>
</dbReference>
<dbReference type="GO" id="GO:0005524">
    <property type="term" value="F:ATP binding"/>
    <property type="evidence" value="ECO:0007669"/>
    <property type="project" value="UniProtKB-KW"/>
</dbReference>
<dbReference type="GO" id="GO:0106310">
    <property type="term" value="F:protein serine kinase activity"/>
    <property type="evidence" value="ECO:0007669"/>
    <property type="project" value="RHEA"/>
</dbReference>
<dbReference type="GO" id="GO:0004674">
    <property type="term" value="F:protein serine/threonine kinase activity"/>
    <property type="evidence" value="ECO:0007669"/>
    <property type="project" value="UniProtKB-KW"/>
</dbReference>
<dbReference type="CDD" id="cd14003">
    <property type="entry name" value="STKc_AMPK-like"/>
    <property type="match status" value="1"/>
</dbReference>
<dbReference type="CDD" id="cd14337">
    <property type="entry name" value="UBA_MARK_Par1"/>
    <property type="match status" value="1"/>
</dbReference>
<dbReference type="FunFam" id="1.10.510.10:FF:000592">
    <property type="entry name" value="CAMK family protein kinase"/>
    <property type="match status" value="1"/>
</dbReference>
<dbReference type="FunFam" id="1.10.8.10:FF:000005">
    <property type="entry name" value="Non-specific serine/threonine protein kinase"/>
    <property type="match status" value="1"/>
</dbReference>
<dbReference type="FunFam" id="3.30.200.20:FF:000003">
    <property type="entry name" value="Non-specific serine/threonine protein kinase"/>
    <property type="match status" value="1"/>
</dbReference>
<dbReference type="Gene3D" id="1.10.8.10">
    <property type="entry name" value="DNA helicase RuvA subunit, C-terminal domain"/>
    <property type="match status" value="1"/>
</dbReference>
<dbReference type="Gene3D" id="3.30.200.20">
    <property type="entry name" value="Phosphorylase Kinase, domain 1"/>
    <property type="match status" value="1"/>
</dbReference>
<dbReference type="Gene3D" id="1.10.510.10">
    <property type="entry name" value="Transferase(Phosphotransferase) domain 1"/>
    <property type="match status" value="1"/>
</dbReference>
<dbReference type="InterPro" id="IPR011009">
    <property type="entry name" value="Kinase-like_dom_sf"/>
</dbReference>
<dbReference type="InterPro" id="IPR000719">
    <property type="entry name" value="Prot_kinase_dom"/>
</dbReference>
<dbReference type="InterPro" id="IPR008271">
    <property type="entry name" value="Ser/Thr_kinase_AS"/>
</dbReference>
<dbReference type="PANTHER" id="PTHR24346">
    <property type="entry name" value="MAP/MICROTUBULE AFFINITY-REGULATING KINASE"/>
    <property type="match status" value="1"/>
</dbReference>
<dbReference type="PANTHER" id="PTHR24346:SF95">
    <property type="entry name" value="SPERM MOTILITY KINASE 3A"/>
    <property type="match status" value="1"/>
</dbReference>
<dbReference type="Pfam" id="PF00069">
    <property type="entry name" value="Pkinase"/>
    <property type="match status" value="1"/>
</dbReference>
<dbReference type="SMART" id="SM00220">
    <property type="entry name" value="S_TKc"/>
    <property type="match status" value="1"/>
</dbReference>
<dbReference type="SUPFAM" id="SSF56112">
    <property type="entry name" value="Protein kinase-like (PK-like)"/>
    <property type="match status" value="1"/>
</dbReference>
<dbReference type="PROSITE" id="PS50011">
    <property type="entry name" value="PROTEIN_KINASE_DOM"/>
    <property type="match status" value="1"/>
</dbReference>
<dbReference type="PROSITE" id="PS00108">
    <property type="entry name" value="PROTEIN_KINASE_ST"/>
    <property type="match status" value="1"/>
</dbReference>
<proteinExistence type="evidence at transcript level"/>
<evidence type="ECO:0000250" key="1">
    <source>
        <dbReference type="UniProtKB" id="Q9QYZ3"/>
    </source>
</evidence>
<evidence type="ECO:0000255" key="2"/>
<evidence type="ECO:0000255" key="3">
    <source>
        <dbReference type="PROSITE-ProRule" id="PRU00159"/>
    </source>
</evidence>
<evidence type="ECO:0000255" key="4">
    <source>
        <dbReference type="PROSITE-ProRule" id="PRU10027"/>
    </source>
</evidence>
<evidence type="ECO:0000256" key="5">
    <source>
        <dbReference type="SAM" id="MobiDB-lite"/>
    </source>
</evidence>
<evidence type="ECO:0000269" key="6">
    <source>
    </source>
</evidence>
<evidence type="ECO:0000305" key="7"/>
<evidence type="ECO:0000312" key="8">
    <source>
        <dbReference type="EMBL" id="CAB61342.1"/>
    </source>
</evidence>
<evidence type="ECO:0000312" key="9">
    <source>
        <dbReference type="MGI" id="MGI:3693943"/>
    </source>
</evidence>
<reference key="1">
    <citation type="journal article" date="1999" name="Nature">
        <title>A protein kinase encoded by the t complex responder gene causes non-Mendelian inheritance.</title>
        <authorList>
            <person name="Herrmann B.G."/>
            <person name="Koschorz B."/>
            <person name="Wertz K."/>
            <person name="McLaughlin K.J."/>
            <person name="Kispert A."/>
        </authorList>
    </citation>
    <scope>NUCLEOTIDE SEQUENCE [MRNA]</scope>
    <scope>FUNCTION</scope>
    <scope>TISSUE SPECIFICITY</scope>
    <source>
        <tissue evidence="8">Testis</tissue>
    </source>
</reference>
<feature type="chain" id="PRO_0000307871" description="Sperm motility kinase 3A">
    <location>
        <begin position="1"/>
        <end position="504"/>
    </location>
</feature>
<feature type="domain" description="Protein kinase" evidence="3">
    <location>
        <begin position="28"/>
        <end position="276"/>
    </location>
</feature>
<feature type="domain" description="UBA" evidence="2">
    <location>
        <begin position="294"/>
        <end position="334"/>
    </location>
</feature>
<feature type="region of interest" description="Disordered" evidence="5">
    <location>
        <begin position="389"/>
        <end position="421"/>
    </location>
</feature>
<feature type="region of interest" description="Disordered" evidence="5">
    <location>
        <begin position="441"/>
        <end position="468"/>
    </location>
</feature>
<feature type="compositionally biased region" description="Polar residues" evidence="5">
    <location>
        <begin position="441"/>
        <end position="451"/>
    </location>
</feature>
<feature type="active site" description="Proton acceptor" evidence="3 4">
    <location>
        <position position="147"/>
    </location>
</feature>
<feature type="binding site" evidence="3">
    <location>
        <begin position="34"/>
        <end position="42"/>
    </location>
    <ligand>
        <name>ATP</name>
        <dbReference type="ChEBI" id="CHEBI:30616"/>
    </ligand>
</feature>
<feature type="binding site" evidence="3">
    <location>
        <position position="57"/>
    </location>
    <ligand>
        <name>ATP</name>
        <dbReference type="ChEBI" id="CHEBI:30616"/>
    </ligand>
</feature>
<name>SMK3A_MOUSE</name>
<organism>
    <name type="scientific">Mus musculus</name>
    <name type="common">Mouse</name>
    <dbReference type="NCBI Taxonomy" id="10090"/>
    <lineage>
        <taxon>Eukaryota</taxon>
        <taxon>Metazoa</taxon>
        <taxon>Chordata</taxon>
        <taxon>Craniata</taxon>
        <taxon>Vertebrata</taxon>
        <taxon>Euteleostomi</taxon>
        <taxon>Mammalia</taxon>
        <taxon>Eutheria</taxon>
        <taxon>Euarchontoglires</taxon>
        <taxon>Glires</taxon>
        <taxon>Rodentia</taxon>
        <taxon>Myomorpha</taxon>
        <taxon>Muroidea</taxon>
        <taxon>Muridae</taxon>
        <taxon>Murinae</taxon>
        <taxon>Mus</taxon>
        <taxon>Mus</taxon>
    </lineage>
</organism>
<accession>C0HKC8</accession>
<accession>Q9QYZ5</accession>